<gene>
    <name type="primary">Eif3f</name>
    <name type="synonym">Eif3s5</name>
</gene>
<keyword id="KW-0007">Acetylation</keyword>
<keyword id="KW-0963">Cytoplasm</keyword>
<keyword id="KW-0378">Hydrolase</keyword>
<keyword id="KW-0396">Initiation factor</keyword>
<keyword id="KW-0597">Phosphoprotein</keyword>
<keyword id="KW-0645">Protease</keyword>
<keyword id="KW-0648">Protein biosynthesis</keyword>
<keyword id="KW-1185">Reference proteome</keyword>
<keyword id="KW-0788">Thiol protease</keyword>
<keyword id="KW-0833">Ubl conjugation pathway</keyword>
<name>EIF3F_MOUSE</name>
<organism>
    <name type="scientific">Mus musculus</name>
    <name type="common">Mouse</name>
    <dbReference type="NCBI Taxonomy" id="10090"/>
    <lineage>
        <taxon>Eukaryota</taxon>
        <taxon>Metazoa</taxon>
        <taxon>Chordata</taxon>
        <taxon>Craniata</taxon>
        <taxon>Vertebrata</taxon>
        <taxon>Euteleostomi</taxon>
        <taxon>Mammalia</taxon>
        <taxon>Eutheria</taxon>
        <taxon>Euarchontoglires</taxon>
        <taxon>Glires</taxon>
        <taxon>Rodentia</taxon>
        <taxon>Myomorpha</taxon>
        <taxon>Muroidea</taxon>
        <taxon>Muridae</taxon>
        <taxon>Murinae</taxon>
        <taxon>Mus</taxon>
        <taxon>Mus</taxon>
    </lineage>
</organism>
<proteinExistence type="evidence at protein level"/>
<comment type="function">
    <text evidence="3">Component of the eukaryotic translation initiation factor 3 (eIF-3) complex, which is required for several steps in the initiation of protein synthesis. The eIF-3 complex associates with the 40S ribosome and facilitates the recruitment of eIF-1, eIF-1A, eIF-2:GTP:methionyl-tRNAi and eIF-5 to form the 43S pre-initiation complex (43S PIC). The eIF-3 complex stimulates mRNA recruitment to the 43S PIC and scanning of the mRNA for AUG recognition. The eIF-3 complex is also required for disassembly and recycling of post-termination ribosomal complexes and subsequently prevents premature joining of the 40S and 60S ribosomal subunits prior to initiation. The eIF-3 complex specifically targets and initiates translation of a subset of mRNAs involved in cell proliferation, including cell cycling, differentiation and apoptosis, and uses different modes of RNA stem-loop binding to exert either translational activation or repression.</text>
</comment>
<comment type="function">
    <text evidence="3 6">Deubiquitinates activated NOTCH1, promoting its nuclear import, thereby acting as a positive regulator of Notch signaling.</text>
</comment>
<comment type="catalytic activity">
    <reaction>
        <text>Thiol-dependent hydrolysis of ester, thioester, amide, peptide and isopeptide bonds formed by the C-terminal Gly of ubiquitin (a 76-residue protein attached to proteins as an intracellular targeting signal).</text>
        <dbReference type="EC" id="3.4.19.12"/>
    </reaction>
</comment>
<comment type="subunit">
    <text evidence="3">Component of the eukaryotic translation initiation factor 3 (eIF-3) complex, which is composed of 13 subunits: EIF3A, EIF3B, EIF3C, EIF3D, EIF3E, EIF3F, EIF3G, EIF3H, EIF3I, EIF3J, EIF3K, EIF3L and EIF3M. The eIF-3 complex appears to include 3 stable modules: module A is composed of EIF3A, EIF3B, EIF3G and EIF3I; module B is composed of EIF3F, EIF3H, and EIF3M; and module C is composed of EIF3C, EIF3D, EIF3E, EIF3K and EIF3L. EIF3C of module C binds EIF3B of module A and EIF3H of module B, thereby linking the three modules. EIF3J is a labile subunit that binds to the eIF-3 complex via EIF3B. The eIF-3 complex may interact with RPS6KB1 under conditions of nutrient depletion. Mitogenic stimulation may lead to binding and activation of a complex composed of MTOR and RPTOR, leading to phosphorylation and release of RPS6KB1 and binding of EIF4B to eIF-3. Interacts with RNF139; the interaction leads to protein translation inhibitions in a ubiquitination-dependent manner. Interacts with DTX1, the interaction is required for deubiquitinating activity towards NOTCH1 (By similarity).</text>
</comment>
<comment type="interaction">
    <interactant intactId="EBI-1634316">
        <id>Q9DCH4</id>
    </interactant>
    <interactant intactId="EBI-1571628">
        <id>Q9JLN9</id>
        <label>Mtor</label>
    </interactant>
    <organismsDiffer>false</organismsDiffer>
    <experiments>5</experiments>
</comment>
<comment type="interaction">
    <interactant intactId="EBI-1634316">
        <id>Q9DCH4</id>
    </interactant>
    <interactant intactId="EBI-1755174">
        <id>Q86Y01</id>
        <label>DTX1</label>
    </interactant>
    <organismsDiffer>true</organismsDiffer>
    <experiments>9</experiments>
</comment>
<comment type="interaction">
    <interactant intactId="EBI-1634316">
        <id>Q9DCH4</id>
    </interactant>
    <interactant intactId="EBI-366617">
        <id>Q14152</id>
        <label>EIF3A</label>
    </interactant>
    <organismsDiffer>true</organismsDiffer>
    <experiments>4</experiments>
</comment>
<comment type="subcellular location">
    <subcellularLocation>
        <location evidence="3">Cytoplasm</location>
    </subcellularLocation>
</comment>
<comment type="domain">
    <text evidence="1">The MPN domain mediates deubiquitinating activity.</text>
</comment>
<comment type="PTM">
    <text evidence="1">Phosphorylation is enhanced upon serum stimulation. Phosphorylated during apoptosis by caspase-processed CDK11 (By similarity).</text>
</comment>
<comment type="similarity">
    <text evidence="3">Belongs to the eIF-3 subunit F family.</text>
</comment>
<reference key="1">
    <citation type="journal article" date="2005" name="Science">
        <title>The transcriptional landscape of the mammalian genome.</title>
        <authorList>
            <person name="Carninci P."/>
            <person name="Kasukawa T."/>
            <person name="Katayama S."/>
            <person name="Gough J."/>
            <person name="Frith M.C."/>
            <person name="Maeda N."/>
            <person name="Oyama R."/>
            <person name="Ravasi T."/>
            <person name="Lenhard B."/>
            <person name="Wells C."/>
            <person name="Kodzius R."/>
            <person name="Shimokawa K."/>
            <person name="Bajic V.B."/>
            <person name="Brenner S.E."/>
            <person name="Batalov S."/>
            <person name="Forrest A.R."/>
            <person name="Zavolan M."/>
            <person name="Davis M.J."/>
            <person name="Wilming L.G."/>
            <person name="Aidinis V."/>
            <person name="Allen J.E."/>
            <person name="Ambesi-Impiombato A."/>
            <person name="Apweiler R."/>
            <person name="Aturaliya R.N."/>
            <person name="Bailey T.L."/>
            <person name="Bansal M."/>
            <person name="Baxter L."/>
            <person name="Beisel K.W."/>
            <person name="Bersano T."/>
            <person name="Bono H."/>
            <person name="Chalk A.M."/>
            <person name="Chiu K.P."/>
            <person name="Choudhary V."/>
            <person name="Christoffels A."/>
            <person name="Clutterbuck D.R."/>
            <person name="Crowe M.L."/>
            <person name="Dalla E."/>
            <person name="Dalrymple B.P."/>
            <person name="de Bono B."/>
            <person name="Della Gatta G."/>
            <person name="di Bernardo D."/>
            <person name="Down T."/>
            <person name="Engstrom P."/>
            <person name="Fagiolini M."/>
            <person name="Faulkner G."/>
            <person name="Fletcher C.F."/>
            <person name="Fukushima T."/>
            <person name="Furuno M."/>
            <person name="Futaki S."/>
            <person name="Gariboldi M."/>
            <person name="Georgii-Hemming P."/>
            <person name="Gingeras T.R."/>
            <person name="Gojobori T."/>
            <person name="Green R.E."/>
            <person name="Gustincich S."/>
            <person name="Harbers M."/>
            <person name="Hayashi Y."/>
            <person name="Hensch T.K."/>
            <person name="Hirokawa N."/>
            <person name="Hill D."/>
            <person name="Huminiecki L."/>
            <person name="Iacono M."/>
            <person name="Ikeo K."/>
            <person name="Iwama A."/>
            <person name="Ishikawa T."/>
            <person name="Jakt M."/>
            <person name="Kanapin A."/>
            <person name="Katoh M."/>
            <person name="Kawasawa Y."/>
            <person name="Kelso J."/>
            <person name="Kitamura H."/>
            <person name="Kitano H."/>
            <person name="Kollias G."/>
            <person name="Krishnan S.P."/>
            <person name="Kruger A."/>
            <person name="Kummerfeld S.K."/>
            <person name="Kurochkin I.V."/>
            <person name="Lareau L.F."/>
            <person name="Lazarevic D."/>
            <person name="Lipovich L."/>
            <person name="Liu J."/>
            <person name="Liuni S."/>
            <person name="McWilliam S."/>
            <person name="Madan Babu M."/>
            <person name="Madera M."/>
            <person name="Marchionni L."/>
            <person name="Matsuda H."/>
            <person name="Matsuzawa S."/>
            <person name="Miki H."/>
            <person name="Mignone F."/>
            <person name="Miyake S."/>
            <person name="Morris K."/>
            <person name="Mottagui-Tabar S."/>
            <person name="Mulder N."/>
            <person name="Nakano N."/>
            <person name="Nakauchi H."/>
            <person name="Ng P."/>
            <person name="Nilsson R."/>
            <person name="Nishiguchi S."/>
            <person name="Nishikawa S."/>
            <person name="Nori F."/>
            <person name="Ohara O."/>
            <person name="Okazaki Y."/>
            <person name="Orlando V."/>
            <person name="Pang K.C."/>
            <person name="Pavan W.J."/>
            <person name="Pavesi G."/>
            <person name="Pesole G."/>
            <person name="Petrovsky N."/>
            <person name="Piazza S."/>
            <person name="Reed J."/>
            <person name="Reid J.F."/>
            <person name="Ring B.Z."/>
            <person name="Ringwald M."/>
            <person name="Rost B."/>
            <person name="Ruan Y."/>
            <person name="Salzberg S.L."/>
            <person name="Sandelin A."/>
            <person name="Schneider C."/>
            <person name="Schoenbach C."/>
            <person name="Sekiguchi K."/>
            <person name="Semple C.A."/>
            <person name="Seno S."/>
            <person name="Sessa L."/>
            <person name="Sheng Y."/>
            <person name="Shibata Y."/>
            <person name="Shimada H."/>
            <person name="Shimada K."/>
            <person name="Silva D."/>
            <person name="Sinclair B."/>
            <person name="Sperling S."/>
            <person name="Stupka E."/>
            <person name="Sugiura K."/>
            <person name="Sultana R."/>
            <person name="Takenaka Y."/>
            <person name="Taki K."/>
            <person name="Tammoja K."/>
            <person name="Tan S.L."/>
            <person name="Tang S."/>
            <person name="Taylor M.S."/>
            <person name="Tegner J."/>
            <person name="Teichmann S.A."/>
            <person name="Ueda H.R."/>
            <person name="van Nimwegen E."/>
            <person name="Verardo R."/>
            <person name="Wei C.L."/>
            <person name="Yagi K."/>
            <person name="Yamanishi H."/>
            <person name="Zabarovsky E."/>
            <person name="Zhu S."/>
            <person name="Zimmer A."/>
            <person name="Hide W."/>
            <person name="Bult C."/>
            <person name="Grimmond S.M."/>
            <person name="Teasdale R.D."/>
            <person name="Liu E.T."/>
            <person name="Brusic V."/>
            <person name="Quackenbush J."/>
            <person name="Wahlestedt C."/>
            <person name="Mattick J.S."/>
            <person name="Hume D.A."/>
            <person name="Kai C."/>
            <person name="Sasaki D."/>
            <person name="Tomaru Y."/>
            <person name="Fukuda S."/>
            <person name="Kanamori-Katayama M."/>
            <person name="Suzuki M."/>
            <person name="Aoki J."/>
            <person name="Arakawa T."/>
            <person name="Iida J."/>
            <person name="Imamura K."/>
            <person name="Itoh M."/>
            <person name="Kato T."/>
            <person name="Kawaji H."/>
            <person name="Kawagashira N."/>
            <person name="Kawashima T."/>
            <person name="Kojima M."/>
            <person name="Kondo S."/>
            <person name="Konno H."/>
            <person name="Nakano K."/>
            <person name="Ninomiya N."/>
            <person name="Nishio T."/>
            <person name="Okada M."/>
            <person name="Plessy C."/>
            <person name="Shibata K."/>
            <person name="Shiraki T."/>
            <person name="Suzuki S."/>
            <person name="Tagami M."/>
            <person name="Waki K."/>
            <person name="Watahiki A."/>
            <person name="Okamura-Oho Y."/>
            <person name="Suzuki H."/>
            <person name="Kawai J."/>
            <person name="Hayashizaki Y."/>
        </authorList>
    </citation>
    <scope>NUCLEOTIDE SEQUENCE [LARGE SCALE MRNA]</scope>
    <source>
        <strain>C57BL/6J</strain>
        <tissue>Kidney</tissue>
    </source>
</reference>
<reference key="2">
    <citation type="submission" date="2005-07" db="EMBL/GenBank/DDBJ databases">
        <authorList>
            <person name="Mural R.J."/>
            <person name="Adams M.D."/>
            <person name="Myers E.W."/>
            <person name="Smith H.O."/>
            <person name="Venter J.C."/>
        </authorList>
    </citation>
    <scope>NUCLEOTIDE SEQUENCE [LARGE SCALE GENOMIC DNA]</scope>
</reference>
<reference key="3">
    <citation type="journal article" date="2004" name="Genome Res.">
        <title>The status, quality, and expansion of the NIH full-length cDNA project: the Mammalian Gene Collection (MGC).</title>
        <authorList>
            <consortium name="The MGC Project Team"/>
        </authorList>
    </citation>
    <scope>NUCLEOTIDE SEQUENCE [LARGE SCALE MRNA]</scope>
    <source>
        <strain>C57BL/6J</strain>
        <tissue>Brain</tissue>
    </source>
</reference>
<reference key="4">
    <citation type="journal article" date="2006" name="EMBO J.">
        <title>mTOR-dependent stimulation of the association of eIF4G and eIF3 by insulin.</title>
        <authorList>
            <person name="Harris T.E."/>
            <person name="Chi A."/>
            <person name="Shabanowitz J."/>
            <person name="Hunt D.F."/>
            <person name="Rhoads R.E."/>
            <person name="Lawrence J.C. Jr."/>
        </authorList>
    </citation>
    <scope>INTERACTION WITH EIF3B AND MTOR</scope>
</reference>
<reference key="5">
    <citation type="journal article" date="2007" name="EMBO J.">
        <title>Reconstitution reveals the functional core of mammalian eIF3.</title>
        <authorList>
            <person name="Masutani M."/>
            <person name="Sonenberg N."/>
            <person name="Yokoyama S."/>
            <person name="Imataka H."/>
        </authorList>
    </citation>
    <scope>FUNCTION</scope>
    <scope>CHARACTERIZATION OF THE EIF-3 COMPLEX</scope>
    <scope>IDENTIFICATION IN THE EIF-3 COMPLEX</scope>
    <scope>IDENTIFICATION BY MASS SPECTROMETRY</scope>
</reference>
<reference key="6">
    <citation type="journal article" date="2010" name="Cell">
        <title>A tissue-specific atlas of mouse protein phosphorylation and expression.</title>
        <authorList>
            <person name="Huttlin E.L."/>
            <person name="Jedrychowski M.P."/>
            <person name="Elias J.E."/>
            <person name="Goswami T."/>
            <person name="Rad R."/>
            <person name="Beausoleil S.A."/>
            <person name="Villen J."/>
            <person name="Haas W."/>
            <person name="Sowa M.E."/>
            <person name="Gygi S.P."/>
        </authorList>
    </citation>
    <scope>IDENTIFICATION BY MASS SPECTROMETRY [LARGE SCALE ANALYSIS]</scope>
    <source>
        <tissue>Brain</tissue>
        <tissue>Brown adipose tissue</tissue>
        <tissue>Heart</tissue>
        <tissue>Kidney</tissue>
        <tissue>Liver</tissue>
        <tissue>Lung</tissue>
        <tissue>Pancreas</tissue>
        <tissue>Spleen</tissue>
        <tissue>Testis</tissue>
    </source>
</reference>
<evidence type="ECO:0000250" key="1"/>
<evidence type="ECO:0000250" key="2">
    <source>
        <dbReference type="UniProtKB" id="O00303"/>
    </source>
</evidence>
<evidence type="ECO:0000255" key="3">
    <source>
        <dbReference type="HAMAP-Rule" id="MF_03005"/>
    </source>
</evidence>
<evidence type="ECO:0000255" key="4">
    <source>
        <dbReference type="PROSITE-ProRule" id="PRU01182"/>
    </source>
</evidence>
<evidence type="ECO:0000256" key="5">
    <source>
        <dbReference type="SAM" id="MobiDB-lite"/>
    </source>
</evidence>
<evidence type="ECO:0000269" key="6">
    <source>
    </source>
</evidence>
<evidence type="ECO:0000305" key="7"/>
<sequence>MASPAVPANVPPATAAAAPAPVVTAAPASAPTPSTPAPTPAATPAASPAPVSSDPAVAAPAAPGQTPASAPAPAQTPAPSQPGPALPGPFPGGRVVRLHPVILASIVDSYERRNEGAARVIGTLLGTVDKHSVEVTNCFSVPHNESEDEVAVDMEFAKNMYELHKKVSPNELILGWYATGHDITEHSVLIHEYYSREAPNPIHLTVDTGLQHGRMSIKAYVSTLMGVPGRTMGVMFTPLTVKYAYYDTERIGVDLIMKTCFSPNRVIGLSSDLQQVGGASARIQDALSTVLQYAEDVLSGKVSADNTVGRFLMSLVNQVPKIVPDDFETMLNSNINDLLMVTYLANLTQSQIALNEKLVNL</sequence>
<accession>Q9DCH4</accession>
<accession>Q5XJV3</accession>
<protein>
    <recommendedName>
        <fullName evidence="3">Eukaryotic translation initiation factor 3 subunit F</fullName>
        <shortName evidence="3">eIF3f</shortName>
    </recommendedName>
    <alternativeName>
        <fullName>Deubiquitinating enzyme eIF3f</fullName>
        <ecNumber>3.4.19.12</ecNumber>
    </alternativeName>
    <alternativeName>
        <fullName evidence="3">Eukaryotic translation initiation factor 3 subunit 5</fullName>
    </alternativeName>
    <alternativeName>
        <fullName evidence="3">eIF-3-epsilon</fullName>
    </alternativeName>
    <alternativeName>
        <fullName evidence="3">eIF3 p47</fullName>
    </alternativeName>
</protein>
<dbReference type="EC" id="3.4.19.12"/>
<dbReference type="EMBL" id="AK002778">
    <property type="protein sequence ID" value="BAB22352.1"/>
    <property type="molecule type" value="mRNA"/>
</dbReference>
<dbReference type="EMBL" id="CH466531">
    <property type="protein sequence ID" value="EDL16920.1"/>
    <property type="molecule type" value="Genomic_DNA"/>
</dbReference>
<dbReference type="EMBL" id="BC083190">
    <property type="protein sequence ID" value="AAH83190.1"/>
    <property type="molecule type" value="mRNA"/>
</dbReference>
<dbReference type="CCDS" id="CCDS21731.1"/>
<dbReference type="RefSeq" id="NP_079620.2">
    <property type="nucleotide sequence ID" value="NM_025344.2"/>
</dbReference>
<dbReference type="SMR" id="Q9DCH4"/>
<dbReference type="BioGRID" id="211203">
    <property type="interactions" value="25"/>
</dbReference>
<dbReference type="DIP" id="DIP-42766N"/>
<dbReference type="FunCoup" id="Q9DCH4">
    <property type="interactions" value="2785"/>
</dbReference>
<dbReference type="IntAct" id="Q9DCH4">
    <property type="interactions" value="10"/>
</dbReference>
<dbReference type="MINT" id="Q9DCH4"/>
<dbReference type="STRING" id="10090.ENSMUSP00000033342"/>
<dbReference type="MEROPS" id="M67.974"/>
<dbReference type="GlyGen" id="Q9DCH4">
    <property type="glycosylation" value="5 sites, 1 O-linked glycan (1 site)"/>
</dbReference>
<dbReference type="iPTMnet" id="Q9DCH4"/>
<dbReference type="PhosphoSitePlus" id="Q9DCH4"/>
<dbReference type="SwissPalm" id="Q9DCH4"/>
<dbReference type="jPOST" id="Q9DCH4"/>
<dbReference type="PaxDb" id="10090-ENSMUSP00000033342"/>
<dbReference type="ProteomicsDB" id="275736"/>
<dbReference type="Pumba" id="Q9DCH4"/>
<dbReference type="Antibodypedia" id="11428">
    <property type="antibodies" value="244 antibodies from 31 providers"/>
</dbReference>
<dbReference type="DNASU" id="66085"/>
<dbReference type="Ensembl" id="ENSMUST00000033342.7">
    <property type="protein sequence ID" value="ENSMUSP00000033342.7"/>
    <property type="gene ID" value="ENSMUSG00000031029.7"/>
</dbReference>
<dbReference type="GeneID" id="66085"/>
<dbReference type="KEGG" id="mmu:66085"/>
<dbReference type="UCSC" id="uc009jdc.2">
    <property type="organism name" value="mouse"/>
</dbReference>
<dbReference type="AGR" id="MGI:1913335"/>
<dbReference type="CTD" id="8665"/>
<dbReference type="MGI" id="MGI:1913335">
    <property type="gene designation" value="Eif3f"/>
</dbReference>
<dbReference type="VEuPathDB" id="HostDB:ENSMUSG00000031029"/>
<dbReference type="eggNOG" id="KOG2975">
    <property type="taxonomic scope" value="Eukaryota"/>
</dbReference>
<dbReference type="GeneTree" id="ENSGT00950000183073"/>
<dbReference type="HOGENOM" id="CLU_027018_0_1_1"/>
<dbReference type="InParanoid" id="Q9DCH4"/>
<dbReference type="OMA" id="EYFVHFH"/>
<dbReference type="OrthoDB" id="25498at2759"/>
<dbReference type="PhylomeDB" id="Q9DCH4"/>
<dbReference type="TreeFam" id="TF101517"/>
<dbReference type="Reactome" id="R-MMU-156827">
    <property type="pathway name" value="L13a-mediated translational silencing of Ceruloplasmin expression"/>
</dbReference>
<dbReference type="Reactome" id="R-MMU-72649">
    <property type="pathway name" value="Translation initiation complex formation"/>
</dbReference>
<dbReference type="Reactome" id="R-MMU-72689">
    <property type="pathway name" value="Formation of a pool of free 40S subunits"/>
</dbReference>
<dbReference type="Reactome" id="R-MMU-72695">
    <property type="pathway name" value="Formation of the ternary complex, and subsequently, the 43S complex"/>
</dbReference>
<dbReference type="Reactome" id="R-MMU-72702">
    <property type="pathway name" value="Ribosomal scanning and start codon recognition"/>
</dbReference>
<dbReference type="Reactome" id="R-MMU-72706">
    <property type="pathway name" value="GTP hydrolysis and joining of the 60S ribosomal subunit"/>
</dbReference>
<dbReference type="BioGRID-ORCS" id="66085">
    <property type="hits" value="29 hits in 80 CRISPR screens"/>
</dbReference>
<dbReference type="ChiTaRS" id="Eif3f">
    <property type="organism name" value="mouse"/>
</dbReference>
<dbReference type="PRO" id="PR:Q9DCH4"/>
<dbReference type="Proteomes" id="UP000000589">
    <property type="component" value="Chromosome 7"/>
</dbReference>
<dbReference type="RNAct" id="Q9DCH4">
    <property type="molecule type" value="protein"/>
</dbReference>
<dbReference type="Bgee" id="ENSMUSG00000031029">
    <property type="expression patterns" value="Expressed in paneth cell and 254 other cell types or tissues"/>
</dbReference>
<dbReference type="GO" id="GO:0016282">
    <property type="term" value="C:eukaryotic 43S preinitiation complex"/>
    <property type="evidence" value="ECO:0007669"/>
    <property type="project" value="UniProtKB-UniRule"/>
</dbReference>
<dbReference type="GO" id="GO:0033290">
    <property type="term" value="C:eukaryotic 48S preinitiation complex"/>
    <property type="evidence" value="ECO:0007669"/>
    <property type="project" value="UniProtKB-UniRule"/>
</dbReference>
<dbReference type="GO" id="GO:0005852">
    <property type="term" value="C:eukaryotic translation initiation factor 3 complex"/>
    <property type="evidence" value="ECO:0000314"/>
    <property type="project" value="UniProtKB"/>
</dbReference>
<dbReference type="GO" id="GO:0071541">
    <property type="term" value="C:eukaryotic translation initiation factor 3 complex, eIF3m"/>
    <property type="evidence" value="ECO:0000314"/>
    <property type="project" value="MGI"/>
</dbReference>
<dbReference type="GO" id="GO:0045202">
    <property type="term" value="C:synapse"/>
    <property type="evidence" value="ECO:0000314"/>
    <property type="project" value="SynGO"/>
</dbReference>
<dbReference type="GO" id="GO:0004843">
    <property type="term" value="F:cysteine-type deubiquitinase activity"/>
    <property type="evidence" value="ECO:0000314"/>
    <property type="project" value="FlyBase"/>
</dbReference>
<dbReference type="GO" id="GO:0042802">
    <property type="term" value="F:identical protein binding"/>
    <property type="evidence" value="ECO:0007669"/>
    <property type="project" value="Ensembl"/>
</dbReference>
<dbReference type="GO" id="GO:0140492">
    <property type="term" value="F:metal-dependent deubiquitinase activity"/>
    <property type="evidence" value="ECO:0007669"/>
    <property type="project" value="Ensembl"/>
</dbReference>
<dbReference type="GO" id="GO:0003743">
    <property type="term" value="F:translation initiation factor activity"/>
    <property type="evidence" value="ECO:0007669"/>
    <property type="project" value="UniProtKB-UniRule"/>
</dbReference>
<dbReference type="GO" id="GO:0031369">
    <property type="term" value="F:translation initiation factor binding"/>
    <property type="evidence" value="ECO:0000314"/>
    <property type="project" value="MGI"/>
</dbReference>
<dbReference type="GO" id="GO:0001732">
    <property type="term" value="P:formation of cytoplasmic translation initiation complex"/>
    <property type="evidence" value="ECO:0007669"/>
    <property type="project" value="UniProtKB-UniRule"/>
</dbReference>
<dbReference type="GO" id="GO:0075522">
    <property type="term" value="P:IRES-dependent viral translational initiation"/>
    <property type="evidence" value="ECO:0007669"/>
    <property type="project" value="Ensembl"/>
</dbReference>
<dbReference type="GO" id="GO:0006508">
    <property type="term" value="P:proteolysis"/>
    <property type="evidence" value="ECO:0007669"/>
    <property type="project" value="UniProtKB-KW"/>
</dbReference>
<dbReference type="GO" id="GO:0006413">
    <property type="term" value="P:translational initiation"/>
    <property type="evidence" value="ECO:0000314"/>
    <property type="project" value="UniProtKB"/>
</dbReference>
<dbReference type="CDD" id="cd08064">
    <property type="entry name" value="MPN_eIF3f"/>
    <property type="match status" value="1"/>
</dbReference>
<dbReference type="FunFam" id="3.40.140.10:FF:000014">
    <property type="entry name" value="Eukaryotic translation initiation factor 3 subunit F"/>
    <property type="match status" value="1"/>
</dbReference>
<dbReference type="Gene3D" id="3.40.140.10">
    <property type="entry name" value="Cytidine Deaminase, domain 2"/>
    <property type="match status" value="1"/>
</dbReference>
<dbReference type="HAMAP" id="MF_03005">
    <property type="entry name" value="eIF3f"/>
    <property type="match status" value="1"/>
</dbReference>
<dbReference type="InterPro" id="IPR027531">
    <property type="entry name" value="eIF3f"/>
</dbReference>
<dbReference type="InterPro" id="IPR024969">
    <property type="entry name" value="EIF3F/CSN6-like_C"/>
</dbReference>
<dbReference type="InterPro" id="IPR000555">
    <property type="entry name" value="JAMM/MPN+_dom"/>
</dbReference>
<dbReference type="InterPro" id="IPR037518">
    <property type="entry name" value="MPN"/>
</dbReference>
<dbReference type="PANTHER" id="PTHR10540:SF6">
    <property type="entry name" value="EUKARYOTIC TRANSLATION INITIATION FACTOR 3 SUBUNIT F"/>
    <property type="match status" value="1"/>
</dbReference>
<dbReference type="PANTHER" id="PTHR10540">
    <property type="entry name" value="EUKARYOTIC TRANSLATION INITIATION FACTOR 3 SUBUNIT F-RELATED"/>
    <property type="match status" value="1"/>
</dbReference>
<dbReference type="Pfam" id="PF01398">
    <property type="entry name" value="JAB"/>
    <property type="match status" value="1"/>
</dbReference>
<dbReference type="Pfam" id="PF13012">
    <property type="entry name" value="MitMem_reg"/>
    <property type="match status" value="1"/>
</dbReference>
<dbReference type="SMART" id="SM00232">
    <property type="entry name" value="JAB_MPN"/>
    <property type="match status" value="1"/>
</dbReference>
<dbReference type="PROSITE" id="PS50249">
    <property type="entry name" value="MPN"/>
    <property type="match status" value="1"/>
</dbReference>
<feature type="initiator methionine" description="Removed" evidence="3">
    <location>
        <position position="1"/>
    </location>
</feature>
<feature type="chain" id="PRO_0000213965" description="Eukaryotic translation initiation factor 3 subunit F">
    <location>
        <begin position="2"/>
        <end position="361"/>
    </location>
</feature>
<feature type="domain" description="MPN" evidence="4">
    <location>
        <begin position="96"/>
        <end position="226"/>
    </location>
</feature>
<feature type="region of interest" description="Disordered" evidence="5">
    <location>
        <begin position="1"/>
        <end position="91"/>
    </location>
</feature>
<feature type="compositionally biased region" description="Low complexity" evidence="5">
    <location>
        <begin position="1"/>
        <end position="32"/>
    </location>
</feature>
<feature type="compositionally biased region" description="Low complexity" evidence="5">
    <location>
        <begin position="42"/>
        <end position="73"/>
    </location>
</feature>
<feature type="compositionally biased region" description="Pro residues" evidence="5">
    <location>
        <begin position="74"/>
        <end position="90"/>
    </location>
</feature>
<feature type="modified residue" description="N-acetylalanine" evidence="2 3">
    <location>
        <position position="2"/>
    </location>
</feature>
<feature type="modified residue" description="Phosphoserine; by CDK11; in vitro" evidence="2 3">
    <location>
        <position position="52"/>
    </location>
</feature>
<feature type="modified residue" description="N6-acetyllysine" evidence="2">
    <location>
        <position position="242"/>
    </location>
</feature>
<feature type="modified residue" description="Phosphoserine" evidence="2 3">
    <location>
        <position position="262"/>
    </location>
</feature>
<feature type="sequence conflict" description="In Ref. 1; BAB22352." evidence="7" ref="1">
    <original>A</original>
    <variation>S</variation>
    <location>
        <position position="198"/>
    </location>
</feature>